<dbReference type="EMBL" id="BC118753">
    <property type="protein sequence ID" value="AAI18754.1"/>
    <property type="molecule type" value="mRNA"/>
</dbReference>
<dbReference type="EMBL" id="CR848149">
    <property type="protein sequence ID" value="CAJ82568.1"/>
    <property type="molecule type" value="mRNA"/>
</dbReference>
<dbReference type="RefSeq" id="NP_001122115.1">
    <property type="nucleotide sequence ID" value="NM_001128643.1"/>
</dbReference>
<dbReference type="SMR" id="Q0VFP3"/>
<dbReference type="FunCoup" id="Q0VFP3">
    <property type="interactions" value="944"/>
</dbReference>
<dbReference type="STRING" id="8364.ENSXETP00000028432"/>
<dbReference type="PaxDb" id="8364-ENSXETP00000007980"/>
<dbReference type="DNASU" id="733803"/>
<dbReference type="GeneID" id="733803"/>
<dbReference type="KEGG" id="xtr:733803"/>
<dbReference type="AGR" id="Xenbase:XB-GENE-5771531"/>
<dbReference type="CTD" id="56181"/>
<dbReference type="Xenbase" id="XB-GENE-5771531">
    <property type="gene designation" value="mtfr1l"/>
</dbReference>
<dbReference type="eggNOG" id="ENOG502QRAC">
    <property type="taxonomic scope" value="Eukaryota"/>
</dbReference>
<dbReference type="InParanoid" id="Q0VFP3"/>
<dbReference type="OMA" id="LRHKWKP"/>
<dbReference type="OrthoDB" id="9930891at2759"/>
<dbReference type="Proteomes" id="UP000008143">
    <property type="component" value="Chromosome 2"/>
</dbReference>
<dbReference type="GO" id="GO:0005741">
    <property type="term" value="C:mitochondrial outer membrane"/>
    <property type="evidence" value="ECO:0007669"/>
    <property type="project" value="UniProtKB-SubCell"/>
</dbReference>
<dbReference type="InterPro" id="IPR007972">
    <property type="entry name" value="Mtfr1"/>
</dbReference>
<dbReference type="PANTHER" id="PTHR14215:SF3">
    <property type="entry name" value="MITOCHONDRIAL FISSION REGULATOR 1-LIKE"/>
    <property type="match status" value="1"/>
</dbReference>
<dbReference type="PANTHER" id="PTHR14215">
    <property type="entry name" value="PROTEIN OF UNKNOWN FUNCTION DUF729"/>
    <property type="match status" value="1"/>
</dbReference>
<dbReference type="Pfam" id="PF05308">
    <property type="entry name" value="Mito_fiss_reg"/>
    <property type="match status" value="1"/>
</dbReference>
<sequence length="319" mass="35457">MASLGAGAEPESVLFGKDGTEACESPEGRRSGRRKRTKIVPVWENKPCGSSRSLVRRIGSHLPLKPCTRACFEALPPASNLYLTDTPMVPTLADVKWLAADEDETYARVRSDTRPLKHKWRPSPLLVMQRNSSVPNLKMKEEKMFCLKKPGLSLNRSSDIQEELSILRSQIARIVAGDSASSCLGSDSIPVNVDLEASLPDYGPSYQSTTSFVISDITEEDELDVSEYSSASLVDSTISLQRQVESNMSDDDEDSLCLSKSNSFADMMGILKDIHKMKLNRDWSNRNQCLHKEEDPVNLISEVLRQKFALCDPDSVKNE</sequence>
<evidence type="ECO:0000250" key="1">
    <source>
        <dbReference type="UniProtKB" id="Q9H019"/>
    </source>
</evidence>
<evidence type="ECO:0000256" key="2">
    <source>
        <dbReference type="SAM" id="MobiDB-lite"/>
    </source>
</evidence>
<evidence type="ECO:0000305" key="3"/>
<keyword id="KW-0472">Membrane</keyword>
<keyword id="KW-0496">Mitochondrion</keyword>
<keyword id="KW-1000">Mitochondrion outer membrane</keyword>
<keyword id="KW-1185">Reference proteome</keyword>
<comment type="function">
    <text evidence="1">Mitochondrial protein required for adaptation of miochondrial dynamics to metabolic changes. Regulates mitochondrial morphology at steady state and mediates AMPK-dependent stress-induced mitochondrial fragmentation via the control of OPA1 levels.</text>
</comment>
<comment type="subcellular location">
    <subcellularLocation>
        <location evidence="1">Mitochondrion outer membrane</location>
        <topology evidence="1">Peripheral membrane protein</topology>
        <orientation evidence="1">Cytoplasmic side</orientation>
    </subcellularLocation>
</comment>
<comment type="similarity">
    <text evidence="3">Belongs to the MTFR1 family.</text>
</comment>
<gene>
    <name type="primary">mtfr1l</name>
    <name type="synonym">fam54b</name>
    <name type="ORF">TGas126o04.1</name>
</gene>
<organism>
    <name type="scientific">Xenopus tropicalis</name>
    <name type="common">Western clawed frog</name>
    <name type="synonym">Silurana tropicalis</name>
    <dbReference type="NCBI Taxonomy" id="8364"/>
    <lineage>
        <taxon>Eukaryota</taxon>
        <taxon>Metazoa</taxon>
        <taxon>Chordata</taxon>
        <taxon>Craniata</taxon>
        <taxon>Vertebrata</taxon>
        <taxon>Euteleostomi</taxon>
        <taxon>Amphibia</taxon>
        <taxon>Batrachia</taxon>
        <taxon>Anura</taxon>
        <taxon>Pipoidea</taxon>
        <taxon>Pipidae</taxon>
        <taxon>Xenopodinae</taxon>
        <taxon>Xenopus</taxon>
        <taxon>Silurana</taxon>
    </lineage>
</organism>
<name>MFR1L_XENTR</name>
<reference key="1">
    <citation type="submission" date="2006-07" db="EMBL/GenBank/DDBJ databases">
        <authorList>
            <consortium name="NIH - Xenopus Gene Collection (XGC) project"/>
        </authorList>
    </citation>
    <scope>NUCLEOTIDE SEQUENCE [LARGE SCALE MRNA]</scope>
    <source>
        <tissue>Brain</tissue>
    </source>
</reference>
<reference key="2">
    <citation type="submission" date="2006-10" db="EMBL/GenBank/DDBJ databases">
        <authorList>
            <consortium name="Sanger Xenopus tropicalis EST/cDNA project"/>
        </authorList>
    </citation>
    <scope>NUCLEOTIDE SEQUENCE [LARGE SCALE MRNA] OF 1-137</scope>
    <source>
        <tissue>Gastrula</tissue>
    </source>
</reference>
<protein>
    <recommendedName>
        <fullName>Mitochondrial fission regulator 1-like</fullName>
    </recommendedName>
</protein>
<accession>Q0VFP3</accession>
<accession>Q28EN7</accession>
<feature type="chain" id="PRO_0000341573" description="Mitochondrial fission regulator 1-like">
    <location>
        <begin position="1"/>
        <end position="319"/>
    </location>
</feature>
<feature type="region of interest" description="Disordered" evidence="2">
    <location>
        <begin position="1"/>
        <end position="35"/>
    </location>
</feature>
<feature type="sequence conflict" description="In Ref. 2; CAJ82568." evidence="3" ref="2">
    <original>T</original>
    <variation>N</variation>
    <location>
        <position position="84"/>
    </location>
</feature>
<feature type="sequence conflict" description="In Ref. 2; CAJ82568." evidence="3" ref="2">
    <original>E</original>
    <variation>D</variation>
    <location>
        <position position="102"/>
    </location>
</feature>
<proteinExistence type="evidence at transcript level"/>